<proteinExistence type="inferred from homology"/>
<keyword id="KW-0028">Amino-acid biosynthesis</keyword>
<keyword id="KW-0963">Cytoplasm</keyword>
<keyword id="KW-0368">Histidine biosynthesis</keyword>
<gene>
    <name evidence="1" type="primary">hisZ</name>
    <name type="ordered locus">BMA10247_1096</name>
</gene>
<organism>
    <name type="scientific">Burkholderia mallei (strain NCTC 10247)</name>
    <dbReference type="NCBI Taxonomy" id="320389"/>
    <lineage>
        <taxon>Bacteria</taxon>
        <taxon>Pseudomonadati</taxon>
        <taxon>Pseudomonadota</taxon>
        <taxon>Betaproteobacteria</taxon>
        <taxon>Burkholderiales</taxon>
        <taxon>Burkholderiaceae</taxon>
        <taxon>Burkholderia</taxon>
        <taxon>pseudomallei group</taxon>
    </lineage>
</organism>
<evidence type="ECO:0000255" key="1">
    <source>
        <dbReference type="HAMAP-Rule" id="MF_00125"/>
    </source>
</evidence>
<reference key="1">
    <citation type="journal article" date="2010" name="Genome Biol. Evol.">
        <title>Continuing evolution of Burkholderia mallei through genome reduction and large-scale rearrangements.</title>
        <authorList>
            <person name="Losada L."/>
            <person name="Ronning C.M."/>
            <person name="DeShazer D."/>
            <person name="Woods D."/>
            <person name="Fedorova N."/>
            <person name="Kim H.S."/>
            <person name="Shabalina S.A."/>
            <person name="Pearson T.R."/>
            <person name="Brinkac L."/>
            <person name="Tan P."/>
            <person name="Nandi T."/>
            <person name="Crabtree J."/>
            <person name="Badger J."/>
            <person name="Beckstrom-Sternberg S."/>
            <person name="Saqib M."/>
            <person name="Schutzer S.E."/>
            <person name="Keim P."/>
            <person name="Nierman W.C."/>
        </authorList>
    </citation>
    <scope>NUCLEOTIDE SEQUENCE [LARGE SCALE GENOMIC DNA]</scope>
    <source>
        <strain>NCTC 10247</strain>
    </source>
</reference>
<sequence length="382" mass="41779">MSTWLLPENIADVLPSEARKIEELRRRLLDRFRSYGYEMVMPPLLEYLESLLTSGGNELRLRTFKLVDQVSGRTLGLRADMTPQVARIDAHLLNRQGVTRLCYAGPVLHTRPRGLHASREQLQIGAEIYGHAGLEADQEIQQLMLDALHLTGLKKIRLDLCHAGVLAALFARDAAAAERGEALYEALAGKDVPRLNELTDDLGADTRAALRALPRLYGDASVLDDARRLLPALPEIARALDDLAHLAAQVKDAEVAIDLADLRGYAYHSGAMFAAYVDGVPNAVAHGGRYDHVGQAYGRARPATGFSLDLREIARISPVEARGAAILAPWKQDDALRAAVGALRDAGEVVIQALPGHDHVLDEFACDRALVERDGAWVIEPR</sequence>
<accession>A3MK64</accession>
<name>HISZ_BURM7</name>
<feature type="chain" id="PRO_1000016250" description="ATP phosphoribosyltransferase regulatory subunit">
    <location>
        <begin position="1"/>
        <end position="382"/>
    </location>
</feature>
<dbReference type="EMBL" id="CP000548">
    <property type="protein sequence ID" value="ABO04576.1"/>
    <property type="molecule type" value="Genomic_DNA"/>
</dbReference>
<dbReference type="RefSeq" id="WP_004192327.1">
    <property type="nucleotide sequence ID" value="NZ_CP007802.1"/>
</dbReference>
<dbReference type="SMR" id="A3MK64"/>
<dbReference type="KEGG" id="bmaz:BM44_2000"/>
<dbReference type="KEGG" id="bmn:BMA10247_1096"/>
<dbReference type="PATRIC" id="fig|320389.8.peg.2245"/>
<dbReference type="UniPathway" id="UPA00031">
    <property type="reaction ID" value="UER00006"/>
</dbReference>
<dbReference type="GO" id="GO:0005737">
    <property type="term" value="C:cytoplasm"/>
    <property type="evidence" value="ECO:0007669"/>
    <property type="project" value="UniProtKB-SubCell"/>
</dbReference>
<dbReference type="GO" id="GO:0004821">
    <property type="term" value="F:histidine-tRNA ligase activity"/>
    <property type="evidence" value="ECO:0007669"/>
    <property type="project" value="TreeGrafter"/>
</dbReference>
<dbReference type="GO" id="GO:0006427">
    <property type="term" value="P:histidyl-tRNA aminoacylation"/>
    <property type="evidence" value="ECO:0007669"/>
    <property type="project" value="TreeGrafter"/>
</dbReference>
<dbReference type="GO" id="GO:0000105">
    <property type="term" value="P:L-histidine biosynthetic process"/>
    <property type="evidence" value="ECO:0007669"/>
    <property type="project" value="UniProtKB-UniRule"/>
</dbReference>
<dbReference type="CDD" id="cd00773">
    <property type="entry name" value="HisRS-like_core"/>
    <property type="match status" value="1"/>
</dbReference>
<dbReference type="Gene3D" id="3.30.930.10">
    <property type="entry name" value="Bira Bifunctional Protein, Domain 2"/>
    <property type="match status" value="1"/>
</dbReference>
<dbReference type="HAMAP" id="MF_00125">
    <property type="entry name" value="HisZ"/>
    <property type="match status" value="1"/>
</dbReference>
<dbReference type="InterPro" id="IPR045864">
    <property type="entry name" value="aa-tRNA-synth_II/BPL/LPL"/>
</dbReference>
<dbReference type="InterPro" id="IPR041715">
    <property type="entry name" value="HisRS-like_core"/>
</dbReference>
<dbReference type="InterPro" id="IPR004516">
    <property type="entry name" value="HisRS/HisZ"/>
</dbReference>
<dbReference type="InterPro" id="IPR004517">
    <property type="entry name" value="HisZ"/>
</dbReference>
<dbReference type="NCBIfam" id="TIGR00443">
    <property type="entry name" value="hisZ_biosyn_reg"/>
    <property type="match status" value="1"/>
</dbReference>
<dbReference type="NCBIfam" id="NF008935">
    <property type="entry name" value="PRK12292.1-1"/>
    <property type="match status" value="1"/>
</dbReference>
<dbReference type="NCBIfam" id="NF009086">
    <property type="entry name" value="PRK12421.1"/>
    <property type="match status" value="1"/>
</dbReference>
<dbReference type="PANTHER" id="PTHR43707:SF1">
    <property type="entry name" value="HISTIDINE--TRNA LIGASE, MITOCHONDRIAL-RELATED"/>
    <property type="match status" value="1"/>
</dbReference>
<dbReference type="PANTHER" id="PTHR43707">
    <property type="entry name" value="HISTIDYL-TRNA SYNTHETASE"/>
    <property type="match status" value="1"/>
</dbReference>
<dbReference type="Pfam" id="PF13393">
    <property type="entry name" value="tRNA-synt_His"/>
    <property type="match status" value="1"/>
</dbReference>
<dbReference type="PIRSF" id="PIRSF001549">
    <property type="entry name" value="His-tRNA_synth"/>
    <property type="match status" value="1"/>
</dbReference>
<dbReference type="SUPFAM" id="SSF55681">
    <property type="entry name" value="Class II aaRS and biotin synthetases"/>
    <property type="match status" value="1"/>
</dbReference>
<protein>
    <recommendedName>
        <fullName evidence="1">ATP phosphoribosyltransferase regulatory subunit</fullName>
    </recommendedName>
</protein>
<comment type="function">
    <text evidence="1">Required for the first step of histidine biosynthesis. May allow the feedback regulation of ATP phosphoribosyltransferase activity by histidine.</text>
</comment>
<comment type="pathway">
    <text evidence="1">Amino-acid biosynthesis; L-histidine biosynthesis; L-histidine from 5-phospho-alpha-D-ribose 1-diphosphate: step 1/9.</text>
</comment>
<comment type="subunit">
    <text evidence="1">Heteromultimer composed of HisG and HisZ subunits.</text>
</comment>
<comment type="subcellular location">
    <subcellularLocation>
        <location evidence="1">Cytoplasm</location>
    </subcellularLocation>
</comment>
<comment type="miscellaneous">
    <text>This function is generally fulfilled by the C-terminal part of HisG, which is missing in some bacteria such as this one.</text>
</comment>
<comment type="similarity">
    <text evidence="1">Belongs to the class-II aminoacyl-tRNA synthetase family. HisZ subfamily.</text>
</comment>